<feature type="chain" id="PRO_0000312121" description="Cytokine-like nuclear factor N-PAC">
    <location>
        <begin position="1"/>
        <end position="553"/>
    </location>
</feature>
<feature type="domain" description="PWWP" evidence="1">
    <location>
        <begin position="8"/>
        <end position="66"/>
    </location>
</feature>
<feature type="DNA-binding region" description="A.T hook" evidence="17">
    <location>
        <begin position="168"/>
        <end position="180"/>
    </location>
</feature>
<feature type="region of interest" description="Disordered" evidence="2">
    <location>
        <begin position="92"/>
        <end position="188"/>
    </location>
</feature>
<feature type="region of interest" description="Interaction with histone H3" evidence="5">
    <location>
        <begin position="214"/>
        <end position="217"/>
    </location>
</feature>
<feature type="region of interest" description="Interaction with KDM1B" evidence="5 20 21 22 23">
    <location>
        <begin position="216"/>
        <end position="225"/>
    </location>
</feature>
<feature type="region of interest" description="Dehydrogenase domain" evidence="17">
    <location>
        <begin position="261"/>
        <end position="553"/>
    </location>
</feature>
<feature type="compositionally biased region" description="Basic and acidic residues" evidence="2">
    <location>
        <begin position="92"/>
        <end position="145"/>
    </location>
</feature>
<feature type="compositionally biased region" description="Basic and acidic residues" evidence="2">
    <location>
        <begin position="162"/>
        <end position="182"/>
    </location>
</feature>
<feature type="binding site" evidence="10 19">
    <location>
        <begin position="271"/>
        <end position="285"/>
    </location>
    <ligand>
        <name>NAD(+)</name>
        <dbReference type="ChEBI" id="CHEBI:57540"/>
    </ligand>
</feature>
<feature type="binding site" evidence="10 19">
    <location>
        <position position="362"/>
    </location>
    <ligand>
        <name>NAD(+)</name>
        <dbReference type="ChEBI" id="CHEBI:57540"/>
    </ligand>
</feature>
<feature type="binding site" evidence="10 19">
    <location>
        <position position="505"/>
    </location>
    <ligand>
        <name>NAD(+)</name>
        <dbReference type="ChEBI" id="CHEBI:57540"/>
    </ligand>
</feature>
<feature type="site" description="Required to promote KDM1B demethylase activity toward histone H3K4me1 and H3K4me2" evidence="5">
    <location>
        <position position="217"/>
    </location>
</feature>
<feature type="modified residue" description="Phosphoserine" evidence="27 29">
    <location>
        <position position="130"/>
    </location>
</feature>
<feature type="modified residue" description="Phosphoserine" evidence="26 28">
    <location>
        <position position="167"/>
    </location>
</feature>
<feature type="modified residue" description="Phosphoserine" evidence="27 28 29">
    <location>
        <position position="540"/>
    </location>
</feature>
<feature type="cross-link" description="Glycyl lysine isopeptide (Lys-Gly) (interchain with G-Cter in SUMO2)" evidence="30 32">
    <location>
        <position position="135"/>
    </location>
</feature>
<feature type="cross-link" description="Glycyl lysine isopeptide (Lys-Gly) (interchain with G-Cter in SUMO2)" evidence="32">
    <location>
        <position position="176"/>
    </location>
</feature>
<feature type="cross-link" description="Glycyl lysine isopeptide (Lys-Gly) (interchain with G-Cter in SUMO2)" evidence="32">
    <location>
        <position position="179"/>
    </location>
</feature>
<feature type="cross-link" description="Glycyl lysine isopeptide (Lys-Gly) (interchain with G-Cter in SUMO2)" evidence="32">
    <location>
        <position position="201"/>
    </location>
</feature>
<feature type="cross-link" description="Glycyl lysine isopeptide (Lys-Gly) (interchain with G-Cter in SUMO2)" evidence="32">
    <location>
        <position position="211"/>
    </location>
</feature>
<feature type="cross-link" description="Glycyl lysine isopeptide (Lys-Gly) (interchain with G-Cter in SUMO2)" evidence="30 32">
    <location>
        <position position="227"/>
    </location>
</feature>
<feature type="cross-link" description="Glycyl lysine isopeptide (Lys-Gly) (interchain with G-Cter in SUMO2)" evidence="30 32">
    <location>
        <position position="237"/>
    </location>
</feature>
<feature type="cross-link" description="Glycyl lysine isopeptide (Lys-Gly) (interchain with G-Cter in SUMO2)" evidence="32">
    <location>
        <position position="240"/>
    </location>
</feature>
<feature type="cross-link" description="Glycyl lysine isopeptide (Lys-Gly) (interchain with G-Cter in SUMO2)" evidence="30 31 32">
    <location>
        <position position="269"/>
    </location>
</feature>
<feature type="cross-link" description="Glycyl lysine isopeptide (Lys-Gly) (interchain with G-Cter in SUMO2)" evidence="32">
    <location>
        <position position="302"/>
    </location>
</feature>
<feature type="splice variant" id="VSP_029706" description="In isoform 4." evidence="12">
    <location>
        <begin position="1"/>
        <end position="69"/>
    </location>
</feature>
<feature type="splice variant" id="VSP_038222" description="In isoform 5." evidence="11">
    <location>
        <begin position="99"/>
        <end position="179"/>
    </location>
</feature>
<feature type="splice variant" id="VSP_029707" description="In isoform 2." evidence="12">
    <location>
        <begin position="228"/>
        <end position="244"/>
    </location>
</feature>
<feature type="splice variant" id="VSP_029708" description="In isoform 3." evidence="15">
    <location>
        <begin position="303"/>
        <end position="308"/>
    </location>
</feature>
<feature type="sequence variant" id="VAR_037403" description="In dbSNP:rs34176249.">
    <original>N</original>
    <variation>D</variation>
    <location>
        <position position="103"/>
    </location>
</feature>
<feature type="sequence variant" id="VAR_037404" description="In dbSNP:rs2085329.">
    <original>Q</original>
    <variation>H</variation>
    <location>
        <position position="459"/>
    </location>
</feature>
<feature type="sequence variant" id="VAR_086184" description="Decreased interaction with GATA4; decreased synergistic activation of GATA4 target genes transcription; detrimental effect on cardiomyocyte differentiation." evidence="9">
    <original>P</original>
    <variation>L</variation>
    <location>
        <position position="496"/>
    </location>
</feature>
<feature type="sequence variant" id="VAR_037405" description="In dbSNP:rs17703111.">
    <original>Y</original>
    <variation>C</variation>
    <location>
        <position position="531"/>
    </location>
</feature>
<feature type="mutagenesis site" description="Slightly reduced stimulation of KDM1B demethylase activity, but normal KDM1B-binding." evidence="5">
    <original>D</original>
    <variation>A</variation>
    <location>
        <position position="214"/>
    </location>
</feature>
<feature type="mutagenesis site" description="Slightly reduced stimulation of KDM1B demethylase activity, but normal KDM1B-binding." evidence="5">
    <original>H</original>
    <variation>A</variation>
    <location>
        <position position="216"/>
    </location>
</feature>
<feature type="mutagenesis site" description="Abolished stimulation of KDM1B demethylase activity, reduced affinity for histone H3 of the dimer with KDM1B, but normal KDM1B-binding." evidence="5">
    <original>F</original>
    <variation>A</variation>
    <location>
        <position position="217"/>
    </location>
</feature>
<feature type="mutagenesis site" description="Impaired KDM1B-binding and abolished stimulation of KDM1B demethylase activity; when associated with A-223." evidence="5">
    <original>H</original>
    <variation>A</variation>
    <location>
        <position position="219"/>
    </location>
</feature>
<feature type="mutagenesis site" description="Impaired KDM1B-binding and abolished stimulation of KDM1B demethylase activity." evidence="5">
    <original>FLL</original>
    <variation>AAA</variation>
    <location>
        <begin position="220"/>
        <end position="222"/>
    </location>
</feature>
<feature type="mutagenesis site" description="Impaired KDM1B-binding and abolished stimulation of KDM1B demethylase activity; when associated with A-219." evidence="5">
    <original>S</original>
    <variation>A</variation>
    <location>
        <position position="223"/>
    </location>
</feature>
<feature type="mutagenesis site" description="Loss of tetramerization and protein stability." evidence="7">
    <original>M</original>
    <variation>K</variation>
    <location>
        <position position="437"/>
    </location>
</feature>
<feature type="mutagenesis site" description="No effect on tetramerization or protein stability." evidence="7">
    <original>M</original>
    <variation>N</variation>
    <location>
        <position position="437"/>
    </location>
</feature>
<feature type="sequence conflict" description="In Ref. 7; AAH32855." evidence="16" ref="7">
    <original>K</original>
    <variation>E</variation>
    <location>
        <position position="40"/>
    </location>
</feature>
<feature type="sequence conflict" description="In Ref. 7; AAH47223." evidence="16" ref="7">
    <original>A</original>
    <variation>T</variation>
    <location>
        <position position="419"/>
    </location>
</feature>
<feature type="sequence conflict" description="In Ref. 7; AAH47223." evidence="16" ref="7">
    <original>Q</original>
    <variation>R</variation>
    <location>
        <position position="463"/>
    </location>
</feature>
<feature type="turn" evidence="34">
    <location>
        <begin position="215"/>
        <end position="217"/>
    </location>
</feature>
<feature type="helix" evidence="34">
    <location>
        <begin position="220"/>
        <end position="222"/>
    </location>
</feature>
<feature type="strand" evidence="33">
    <location>
        <begin position="270"/>
        <end position="273"/>
    </location>
</feature>
<feature type="helix" evidence="33">
    <location>
        <begin position="277"/>
        <end position="288"/>
    </location>
</feature>
<feature type="strand" evidence="33">
    <location>
        <begin position="293"/>
        <end position="296"/>
    </location>
</feature>
<feature type="helix" evidence="33">
    <location>
        <begin position="300"/>
        <end position="303"/>
    </location>
</feature>
<feature type="helix" evidence="33">
    <location>
        <begin position="304"/>
        <end position="308"/>
    </location>
</feature>
<feature type="helix" evidence="33">
    <location>
        <begin position="317"/>
        <end position="323"/>
    </location>
</feature>
<feature type="strand" evidence="33">
    <location>
        <begin position="325"/>
        <end position="329"/>
    </location>
</feature>
<feature type="helix" evidence="33">
    <location>
        <begin position="334"/>
        <end position="342"/>
    </location>
</feature>
<feature type="helix" evidence="33">
    <location>
        <begin position="347"/>
        <end position="350"/>
    </location>
</feature>
<feature type="strand" evidence="33">
    <location>
        <begin position="356"/>
        <end position="359"/>
    </location>
</feature>
<feature type="helix" evidence="33">
    <location>
        <begin position="365"/>
        <end position="377"/>
    </location>
</feature>
<feature type="strand" evidence="33">
    <location>
        <begin position="381"/>
        <end position="384"/>
    </location>
</feature>
<feature type="strand" evidence="33">
    <location>
        <begin position="387"/>
        <end position="389"/>
    </location>
</feature>
<feature type="helix" evidence="33">
    <location>
        <begin position="391"/>
        <end position="396"/>
    </location>
</feature>
<feature type="strand" evidence="33">
    <location>
        <begin position="399"/>
        <end position="405"/>
    </location>
</feature>
<feature type="helix" evidence="33">
    <location>
        <begin position="407"/>
        <end position="412"/>
    </location>
</feature>
<feature type="helix" evidence="33">
    <location>
        <begin position="414"/>
        <end position="420"/>
    </location>
</feature>
<feature type="strand" evidence="33">
    <location>
        <begin position="421"/>
        <end position="426"/>
    </location>
</feature>
<feature type="helix" evidence="33">
    <location>
        <begin position="432"/>
        <end position="460"/>
    </location>
</feature>
<feature type="helix" evidence="33">
    <location>
        <begin position="465"/>
        <end position="474"/>
    </location>
</feature>
<feature type="helix" evidence="33">
    <location>
        <begin position="480"/>
        <end position="491"/>
    </location>
</feature>
<feature type="strand" evidence="33">
    <location>
        <begin position="497"/>
        <end position="499"/>
    </location>
</feature>
<feature type="helix" evidence="33">
    <location>
        <begin position="500"/>
        <end position="516"/>
    </location>
</feature>
<feature type="helix" evidence="33">
    <location>
        <begin position="522"/>
        <end position="536"/>
    </location>
</feature>
<feature type="helix" evidence="33">
    <location>
        <begin position="544"/>
        <end position="550"/>
    </location>
</feature>
<sequence>MAAVSLRLGDLVWGKLGRYPPWPGKIVNPPKDLKKPRGKKCFFVKFFGTEDHAWIKVEQLKPYHAHKEEMIKINKGKRFQQAVDAVEEFLRRAKGKDQTSSHNSSDDKNRRNSSEERSRPNSGDEKRKLSLSEGKVKKNMGEGKKRVSSGSSERGSKSPLKRAQEQSPRKRGRPPKDEKDLTIPESSTVKGMMAGPMAAFKWQPTASEPVKDADPHFHHFLLSQTEKPAVCYQAITKKLKICEEETGSTSIQAADSTAVNGSITPTDKKIGFLGLGLMGSGIVSNLLKMGHTVTVWNRTAEKCDLFIQEGARLGRTPAEVVSTCDITFACVSDPKAAKDLVLGPSGVLQGIRPGKCYVDMSTVDADTVTELAQVIVSRGGRFLEAPVSGNQQLSNDGMLVILAAGDRGLYEDCSSCFQAMGKTSFFLGEVGNAAKMMLIVNMVQGSFMATIAEGLTLAQVTGQSQQTLLDILNQGQLASIFLDQKCQNILQGNFKPDFYLKYIQKDLRLAIALGDAVNHPTPMAAAANEVYKRAKALDQSDNDMSAVYRAYIH</sequence>
<comment type="function">
    <text evidence="3 4 5 6 7 9">Cytokine-like nuclear factor with chromatin gene reader activity involved in chromatin modification and regulation of gene expression (PubMed:23260659, PubMed:30970244). Acts as a nucleosome-destabilizing factor that is recruited to genes during transcriptional activation (PubMed:29759984, PubMed:30970244). Recognizes and binds histone H3 without a preference for specific epigenetic markers and also binds DNA (PubMed:20850016, PubMed:30970244). Interacts with KDM1B and promotes its histone demethylase activity by facilitating the capture of H3 tails, they form a multifunctional enzyme complex that modifies transcribed chromatin and facilitates Pol II transcription through nucleosomes (PubMed:23260659, PubMed:29759984, PubMed:30970244). Stimulates the acetylation of 'Lys-56' of nucleosomal histone H3 (H3K56ac) by EP300 (PubMed:29759984). With GATA4, co-binds a defined set of heart development genes and coregulates their expression during cardiomyocyte differentiation (PubMed:35182466). Regulates p38 MAP kinase activity by mediating stress activation of MAPK14/p38alpha and specifically regulating MAPK14 signaling (PubMed:16352664). Indirectly promotes phosphorylation of MAPK14 and activation of ATF2 (PubMed:16352664). The phosphorylation of MAPK14 requires upstream activity of MAP2K4 and MAP2K6 (PubMed:16352664).</text>
</comment>
<comment type="subunit">
    <text evidence="3 5 6 7 8 9">Homotetramere (PubMed:30970244, PubMed:31408337). Interacts with MAPK14 (PubMed:16352664). Interacts with KDM1B at nucleosomes; this interaction stimulates H3K4me1 and H3K4me2 demethylation (PubMed:23260659). Binds to mononucleosomes (PubMed:29759984). Interacts with GATA4; the interaction is required for a synergistic activation of GATA4 target genes transcription (PubMed:35182466).</text>
</comment>
<comment type="interaction">
    <interactant intactId="EBI-2804292">
        <id>Q49A26</id>
    </interactant>
    <interactant intactId="EBI-395261">
        <id>P24863</id>
        <label>CCNC</label>
    </interactant>
    <organismsDiffer>false</organismsDiffer>
    <experiments>3</experiments>
</comment>
<comment type="interaction">
    <interactant intactId="EBI-2804292">
        <id>Q49A26</id>
    </interactant>
    <interactant intactId="EBI-749051">
        <id>Q8IYR0</id>
        <label>CFAP206</label>
    </interactant>
    <organismsDiffer>false</organismsDiffer>
    <experiments>3</experiments>
</comment>
<comment type="interaction">
    <interactant intactId="EBI-2804292">
        <id>Q49A26</id>
    </interactant>
    <interactant intactId="EBI-750700">
        <id>Q8N9N8</id>
        <label>EIF1AD</label>
    </interactant>
    <organismsDiffer>false</organismsDiffer>
    <experiments>4</experiments>
</comment>
<comment type="interaction">
    <interactant intactId="EBI-2804292">
        <id>Q49A26</id>
    </interactant>
    <interactant intactId="EBI-701903">
        <id>Q14192</id>
        <label>FHL2</label>
    </interactant>
    <organismsDiffer>false</organismsDiffer>
    <experiments>4</experiments>
</comment>
<comment type="interaction">
    <interactant intactId="EBI-12143817">
        <id>Q49A26-4</id>
    </interactant>
    <interactant intactId="EBI-10186132">
        <id>Q0P5N6</id>
        <label>ARL16</label>
    </interactant>
    <organismsDiffer>false</organismsDiffer>
    <experiments>3</experiments>
</comment>
<comment type="interaction">
    <interactant intactId="EBI-12143817">
        <id>Q49A26-4</id>
    </interactant>
    <interactant intactId="EBI-718729">
        <id>P55212</id>
        <label>CASP6</label>
    </interactant>
    <organismsDiffer>false</organismsDiffer>
    <experiments>3</experiments>
</comment>
<comment type="interaction">
    <interactant intactId="EBI-12143817">
        <id>Q49A26-4</id>
    </interactant>
    <interactant intactId="EBI-745859">
        <id>P55273</id>
        <label>CDKN2D</label>
    </interactant>
    <organismsDiffer>false</organismsDiffer>
    <experiments>3</experiments>
</comment>
<comment type="interaction">
    <interactant intactId="EBI-12143817">
        <id>Q49A26-4</id>
    </interactant>
    <interactant intactId="EBI-10192241">
        <id>O95833</id>
        <label>CLIC3</label>
    </interactant>
    <organismsDiffer>false</organismsDiffer>
    <experiments>3</experiments>
</comment>
<comment type="interaction">
    <interactant intactId="EBI-12143817">
        <id>Q49A26-4</id>
    </interactant>
    <interactant intactId="EBI-348399">
        <id>P22607</id>
        <label>FGFR3</label>
    </interactant>
    <organismsDiffer>false</organismsDiffer>
    <experiments>3</experiments>
</comment>
<comment type="interaction">
    <interactant intactId="EBI-12143817">
        <id>Q49A26-4</id>
    </interactant>
    <interactant intactId="EBI-701903">
        <id>Q14192</id>
        <label>FHL2</label>
    </interactant>
    <organismsDiffer>false</organismsDiffer>
    <experiments>3</experiments>
</comment>
<comment type="interaction">
    <interactant intactId="EBI-12143817">
        <id>Q49A26-4</id>
    </interactant>
    <interactant intactId="EBI-8285963">
        <id>Q14957</id>
        <label>GRIN2C</label>
    </interactant>
    <organismsDiffer>false</organismsDiffer>
    <experiments>3</experiments>
</comment>
<comment type="interaction">
    <interactant intactId="EBI-12143817">
        <id>Q49A26-4</id>
    </interactant>
    <interactant intactId="EBI-473886">
        <id>O00291</id>
        <label>HIP1</label>
    </interactant>
    <organismsDiffer>false</organismsDiffer>
    <experiments>3</experiments>
</comment>
<comment type="interaction">
    <interactant intactId="EBI-12143817">
        <id>Q49A26-4</id>
    </interactant>
    <interactant intactId="EBI-21591415">
        <id>P13473-2</id>
        <label>LAMP2</label>
    </interactant>
    <organismsDiffer>false</organismsDiffer>
    <experiments>3</experiments>
</comment>
<comment type="interaction">
    <interactant intactId="EBI-12143817">
        <id>Q49A26-4</id>
    </interactant>
    <interactant intactId="EBI-373016">
        <id>Q9BV86</id>
        <label>NTMT1</label>
    </interactant>
    <organismsDiffer>false</organismsDiffer>
    <experiments>3</experiments>
</comment>
<comment type="interaction">
    <interactant intactId="EBI-12143817">
        <id>Q49A26-4</id>
    </interactant>
    <interactant intactId="EBI-748974">
        <id>Q96CV9</id>
        <label>OPTN</label>
    </interactant>
    <organismsDiffer>false</organismsDiffer>
    <experiments>3</experiments>
</comment>
<comment type="interaction">
    <interactant intactId="EBI-12143817">
        <id>Q49A26-4</id>
    </interactant>
    <interactant intactId="EBI-5280197">
        <id>O75400-2</id>
        <label>PRPF40A</label>
    </interactant>
    <organismsDiffer>false</organismsDiffer>
    <experiments>3</experiments>
</comment>
<comment type="interaction">
    <interactant intactId="EBI-12143817">
        <id>Q49A26-4</id>
    </interactant>
    <interactant intactId="EBI-286642">
        <id>P62826</id>
        <label>RAN</label>
    </interactant>
    <organismsDiffer>false</organismsDiffer>
    <experiments>3</experiments>
</comment>
<comment type="interaction">
    <interactant intactId="EBI-12143817">
        <id>Q49A26-4</id>
    </interactant>
    <interactant intactId="EBI-741480">
        <id>Q9UMX0</id>
        <label>UBQLN1</label>
    </interactant>
    <organismsDiffer>false</organismsDiffer>
    <experiments>3</experiments>
</comment>
<comment type="subcellular location">
    <subcellularLocation>
        <location evidence="3">Nucleus</location>
    </subcellularLocation>
    <subcellularLocation>
        <location evidence="6 7">Chromosome</location>
    </subcellularLocation>
    <text evidence="7 8">Found in actively RNAPolII-transcribed gene bodies.</text>
</comment>
<comment type="alternative products">
    <event type="alternative splicing"/>
    <isoform>
        <id>Q49A26-1</id>
        <name>1</name>
        <sequence type="displayed"/>
    </isoform>
    <isoform>
        <id>Q49A26-2</id>
        <name>2</name>
        <sequence type="described" ref="VSP_029707"/>
    </isoform>
    <isoform>
        <id>Q49A26-5</id>
        <name>5</name>
        <sequence type="described" ref="VSP_038222"/>
    </isoform>
    <isoform>
        <id>Q49A26-3</id>
        <name>3</name>
        <sequence type="described" ref="VSP_029708"/>
    </isoform>
    <isoform>
        <id>Q49A26-4</id>
        <name>4</name>
        <sequence type="described" ref="VSP_029706"/>
    </isoform>
</comment>
<comment type="domain">
    <text evidence="3 16">The A.T hook DNA-binding domain is required for the interaction with MAPK14.</text>
</comment>
<comment type="domain">
    <text evidence="4 7">The PWWP domain is a H3 reader and strongly binds DNA.</text>
</comment>
<comment type="domain">
    <text evidence="5 7">In the dehydrogenase domain, the conserved NAD(P)H-binding sites and sequence similarity to plant dehydrogenases suggest that this protein may have oxidoreductase activity (PubMed:23260659, PubMed:30970244). However, since the active site is not conserved, the dehydrogenase domain seems to serve as a catalytically inert oligomerization module (PubMed:30970244).</text>
</comment>
<comment type="similarity">
    <text evidence="16">Belongs to the HIBADH-related family. NP60 subfamily.</text>
</comment>
<protein>
    <recommendedName>
        <fullName evidence="17">Cytokine-like nuclear factor N-PAC</fullName>
        <shortName evidence="14">NPAC</shortName>
    </recommendedName>
    <alternativeName>
        <fullName>3-hydroxyisobutyrate dehydrogenase-like protein</fullName>
    </alternativeName>
    <alternativeName>
        <fullName>Glyoxylate reductase 1 homolog</fullName>
    </alternativeName>
    <alternativeName>
        <fullName>Nuclear protein NP60</fullName>
    </alternativeName>
    <alternativeName>
        <fullName>Nuclear protein of 60 kDa</fullName>
    </alternativeName>
    <alternativeName>
        <fullName evidence="13">Nucleosome-destabilizing factor</fullName>
        <shortName evidence="13">hNDF</shortName>
    </alternativeName>
    <alternativeName>
        <fullName evidence="16">Putative oxidoreductase GLYR1</fullName>
    </alternativeName>
</protein>
<organism>
    <name type="scientific">Homo sapiens</name>
    <name type="common">Human</name>
    <dbReference type="NCBI Taxonomy" id="9606"/>
    <lineage>
        <taxon>Eukaryota</taxon>
        <taxon>Metazoa</taxon>
        <taxon>Chordata</taxon>
        <taxon>Craniata</taxon>
        <taxon>Vertebrata</taxon>
        <taxon>Euteleostomi</taxon>
        <taxon>Mammalia</taxon>
        <taxon>Eutheria</taxon>
        <taxon>Euarchontoglires</taxon>
        <taxon>Primates</taxon>
        <taxon>Haplorrhini</taxon>
        <taxon>Catarrhini</taxon>
        <taxon>Hominidae</taxon>
        <taxon>Homo</taxon>
    </lineage>
</organism>
<dbReference type="EMBL" id="AY352585">
    <property type="protein sequence ID" value="AAQ57265.1"/>
    <property type="molecule type" value="mRNA"/>
</dbReference>
<dbReference type="EMBL" id="AF244907">
    <property type="protein sequence ID" value="AAQ14242.1"/>
    <property type="molecule type" value="mRNA"/>
</dbReference>
<dbReference type="EMBL" id="AF326966">
    <property type="protein sequence ID" value="AAK15524.1"/>
    <property type="molecule type" value="mRNA"/>
</dbReference>
<dbReference type="EMBL" id="AK296842">
    <property type="protein sequence ID" value="BAG59409.1"/>
    <property type="molecule type" value="mRNA"/>
</dbReference>
<dbReference type="EMBL" id="AC020663">
    <property type="status" value="NOT_ANNOTATED_CDS"/>
    <property type="molecule type" value="Genomic_DNA"/>
</dbReference>
<dbReference type="EMBL" id="CH471112">
    <property type="protein sequence ID" value="EAW85252.1"/>
    <property type="molecule type" value="Genomic_DNA"/>
</dbReference>
<dbReference type="EMBL" id="CH471112">
    <property type="protein sequence ID" value="EAW85257.1"/>
    <property type="molecule type" value="Genomic_DNA"/>
</dbReference>
<dbReference type="EMBL" id="BC003693">
    <property type="protein sequence ID" value="AAH03693.1"/>
    <property type="molecule type" value="mRNA"/>
</dbReference>
<dbReference type="EMBL" id="BC032855">
    <property type="protein sequence ID" value="AAH32855.1"/>
    <property type="molecule type" value="mRNA"/>
</dbReference>
<dbReference type="EMBL" id="BC047223">
    <property type="protein sequence ID" value="AAH47223.1"/>
    <property type="molecule type" value="mRNA"/>
</dbReference>
<dbReference type="EMBL" id="BC064940">
    <property type="protein sequence ID" value="AAH64940.1"/>
    <property type="molecule type" value="mRNA"/>
</dbReference>
<dbReference type="CCDS" id="CCDS10524.1">
    <molecule id="Q49A26-1"/>
</dbReference>
<dbReference type="CCDS" id="CCDS81945.1">
    <molecule id="Q49A26-3"/>
</dbReference>
<dbReference type="CCDS" id="CCDS92098.1">
    <molecule id="Q49A26-5"/>
</dbReference>
<dbReference type="RefSeq" id="NP_001295025.1">
    <molecule id="Q49A26-3"/>
    <property type="nucleotide sequence ID" value="NM_001308096.2"/>
</dbReference>
<dbReference type="RefSeq" id="NP_001311026.2">
    <molecule id="Q49A26-5"/>
    <property type="nucleotide sequence ID" value="NM_001324097.2"/>
</dbReference>
<dbReference type="RefSeq" id="NP_001311027.2">
    <molecule id="Q49A26-2"/>
    <property type="nucleotide sequence ID" value="NM_001324098.2"/>
</dbReference>
<dbReference type="RefSeq" id="NP_115958.2">
    <molecule id="Q49A26-1"/>
    <property type="nucleotide sequence ID" value="NM_032569.3"/>
</dbReference>
<dbReference type="RefSeq" id="XP_011521019.1">
    <property type="nucleotide sequence ID" value="XM_011522717.1"/>
</dbReference>
<dbReference type="PDB" id="2UYY">
    <property type="method" value="X-ray"/>
    <property type="resolution" value="2.50 A"/>
    <property type="chains" value="A/B/C/D=261-553"/>
</dbReference>
<dbReference type="PDB" id="4GUR">
    <property type="method" value="X-ray"/>
    <property type="resolution" value="2.51 A"/>
    <property type="chains" value="B=152-268"/>
</dbReference>
<dbReference type="PDB" id="4GUS">
    <property type="method" value="X-ray"/>
    <property type="resolution" value="2.23 A"/>
    <property type="chains" value="B=152-268"/>
</dbReference>
<dbReference type="PDB" id="4GUT">
    <property type="method" value="X-ray"/>
    <property type="resolution" value="2.00 A"/>
    <property type="chains" value="B=152-268"/>
</dbReference>
<dbReference type="PDB" id="4GUU">
    <property type="method" value="X-ray"/>
    <property type="resolution" value="2.30 A"/>
    <property type="chains" value="B=152-268"/>
</dbReference>
<dbReference type="PDB" id="4HSU">
    <property type="method" value="X-ray"/>
    <property type="resolution" value="1.99 A"/>
    <property type="chains" value="B=152-268"/>
</dbReference>
<dbReference type="PDB" id="6R1U">
    <property type="method" value="EM"/>
    <property type="resolution" value="4.36 A"/>
    <property type="chains" value="L=152-268"/>
</dbReference>
<dbReference type="PDB" id="6R25">
    <property type="method" value="EM"/>
    <property type="resolution" value="4.61 A"/>
    <property type="chains" value="L=214-225"/>
</dbReference>
<dbReference type="PDBsum" id="2UYY"/>
<dbReference type="PDBsum" id="4GUR"/>
<dbReference type="PDBsum" id="4GUS"/>
<dbReference type="PDBsum" id="4GUT"/>
<dbReference type="PDBsum" id="4GUU"/>
<dbReference type="PDBsum" id="4HSU"/>
<dbReference type="PDBsum" id="6R1U"/>
<dbReference type="PDBsum" id="6R25"/>
<dbReference type="EMDB" id="EMD-4705"/>
<dbReference type="EMDB" id="EMD-4710"/>
<dbReference type="SASBDB" id="Q49A26"/>
<dbReference type="SMR" id="Q49A26"/>
<dbReference type="BioGRID" id="124176">
    <property type="interactions" value="255"/>
</dbReference>
<dbReference type="FunCoup" id="Q49A26">
    <property type="interactions" value="3951"/>
</dbReference>
<dbReference type="IntAct" id="Q49A26">
    <property type="interactions" value="196"/>
</dbReference>
<dbReference type="MINT" id="Q49A26"/>
<dbReference type="STRING" id="9606.ENSP00000322716"/>
<dbReference type="GlyGen" id="Q49A26">
    <property type="glycosylation" value="1 site, 1 O-linked glycan (1 site)"/>
</dbReference>
<dbReference type="iPTMnet" id="Q49A26"/>
<dbReference type="PhosphoSitePlus" id="Q49A26"/>
<dbReference type="SwissPalm" id="Q49A26"/>
<dbReference type="BioMuta" id="GLYR1"/>
<dbReference type="DMDM" id="269849681"/>
<dbReference type="CPTAC" id="CPTAC-1348"/>
<dbReference type="jPOST" id="Q49A26"/>
<dbReference type="MassIVE" id="Q49A26"/>
<dbReference type="PaxDb" id="9606-ENSP00000322716"/>
<dbReference type="PeptideAtlas" id="Q49A26"/>
<dbReference type="ProteomicsDB" id="62016">
    <molecule id="Q49A26-1"/>
</dbReference>
<dbReference type="ProteomicsDB" id="62017">
    <molecule id="Q49A26-2"/>
</dbReference>
<dbReference type="ProteomicsDB" id="62018">
    <molecule id="Q49A26-3"/>
</dbReference>
<dbReference type="ProteomicsDB" id="62019">
    <molecule id="Q49A26-4"/>
</dbReference>
<dbReference type="ProteomicsDB" id="62020">
    <molecule id="Q49A26-5"/>
</dbReference>
<dbReference type="Pumba" id="Q49A26"/>
<dbReference type="TopDownProteomics" id="Q49A26-2">
    <molecule id="Q49A26-2"/>
</dbReference>
<dbReference type="Antibodypedia" id="24437">
    <property type="antibodies" value="110 antibodies from 22 providers"/>
</dbReference>
<dbReference type="DNASU" id="84656"/>
<dbReference type="Ensembl" id="ENST00000321919.14">
    <molecule id="Q49A26-1"/>
    <property type="protein sequence ID" value="ENSP00000322716.6"/>
    <property type="gene ID" value="ENSG00000140632.17"/>
</dbReference>
<dbReference type="Ensembl" id="ENST00000436648.9">
    <molecule id="Q49A26-5"/>
    <property type="protein sequence ID" value="ENSP00000390276.4"/>
    <property type="gene ID" value="ENSG00000140632.17"/>
</dbReference>
<dbReference type="Ensembl" id="ENST00000591451.5">
    <molecule id="Q49A26-3"/>
    <property type="protein sequence ID" value="ENSP00000468328.1"/>
    <property type="gene ID" value="ENSG00000140632.17"/>
</dbReference>
<dbReference type="GeneID" id="84656"/>
<dbReference type="KEGG" id="hsa:84656"/>
<dbReference type="MANE-Select" id="ENST00000321919.14">
    <property type="protein sequence ID" value="ENSP00000322716.6"/>
    <property type="RefSeq nucleotide sequence ID" value="NM_032569.4"/>
    <property type="RefSeq protein sequence ID" value="NP_115958.2"/>
</dbReference>
<dbReference type="UCSC" id="uc002cxx.5">
    <molecule id="Q49A26-1"/>
    <property type="organism name" value="human"/>
</dbReference>
<dbReference type="AGR" id="HGNC:24434"/>
<dbReference type="CTD" id="84656"/>
<dbReference type="DisGeNET" id="84656"/>
<dbReference type="GeneCards" id="GLYR1"/>
<dbReference type="HGNC" id="HGNC:24434">
    <property type="gene designation" value="GLYR1"/>
</dbReference>
<dbReference type="HPA" id="ENSG00000140632">
    <property type="expression patterns" value="Low tissue specificity"/>
</dbReference>
<dbReference type="MIM" id="610660">
    <property type="type" value="gene"/>
</dbReference>
<dbReference type="neXtProt" id="NX_Q49A26"/>
<dbReference type="OpenTargets" id="ENSG00000140632"/>
<dbReference type="PharmGKB" id="PA165450093"/>
<dbReference type="VEuPathDB" id="HostDB:ENSG00000140632"/>
<dbReference type="eggNOG" id="KOG0409">
    <property type="taxonomic scope" value="Eukaryota"/>
</dbReference>
<dbReference type="eggNOG" id="KOG1904">
    <property type="taxonomic scope" value="Eukaryota"/>
</dbReference>
<dbReference type="GeneTree" id="ENSGT00940000156435"/>
<dbReference type="HOGENOM" id="CLU_018075_0_0_1"/>
<dbReference type="InParanoid" id="Q49A26"/>
<dbReference type="OMA" id="QMISGIT"/>
<dbReference type="OrthoDB" id="21615at2759"/>
<dbReference type="PAN-GO" id="Q49A26">
    <property type="GO annotations" value="1 GO annotation based on evolutionary models"/>
</dbReference>
<dbReference type="PhylomeDB" id="Q49A26"/>
<dbReference type="TreeFam" id="TF324195"/>
<dbReference type="PathwayCommons" id="Q49A26"/>
<dbReference type="SignaLink" id="Q49A26"/>
<dbReference type="SIGNOR" id="Q49A26"/>
<dbReference type="BioGRID-ORCS" id="84656">
    <property type="hits" value="23 hits in 1165 CRISPR screens"/>
</dbReference>
<dbReference type="CD-CODE" id="232F8A39">
    <property type="entry name" value="P-body"/>
</dbReference>
<dbReference type="ChiTaRS" id="GLYR1">
    <property type="organism name" value="human"/>
</dbReference>
<dbReference type="EvolutionaryTrace" id="Q49A26"/>
<dbReference type="GenomeRNAi" id="84656"/>
<dbReference type="Pharos" id="Q49A26">
    <property type="development level" value="Tbio"/>
</dbReference>
<dbReference type="PRO" id="PR:Q49A26"/>
<dbReference type="Proteomes" id="UP000005640">
    <property type="component" value="Chromosome 16"/>
</dbReference>
<dbReference type="RNAct" id="Q49A26">
    <property type="molecule type" value="protein"/>
</dbReference>
<dbReference type="Bgee" id="ENSG00000140632">
    <property type="expression patterns" value="Expressed in monocyte and 198 other cell types or tissues"/>
</dbReference>
<dbReference type="ExpressionAtlas" id="Q49A26">
    <property type="expression patterns" value="baseline and differential"/>
</dbReference>
<dbReference type="GO" id="GO:0000785">
    <property type="term" value="C:chromatin"/>
    <property type="evidence" value="ECO:0000314"/>
    <property type="project" value="UniProt"/>
</dbReference>
<dbReference type="GO" id="GO:0005829">
    <property type="term" value="C:cytosol"/>
    <property type="evidence" value="ECO:0000314"/>
    <property type="project" value="HPA"/>
</dbReference>
<dbReference type="GO" id="GO:0005654">
    <property type="term" value="C:nucleoplasm"/>
    <property type="evidence" value="ECO:0000314"/>
    <property type="project" value="HPA"/>
</dbReference>
<dbReference type="GO" id="GO:0000786">
    <property type="term" value="C:nucleosome"/>
    <property type="evidence" value="ECO:0000314"/>
    <property type="project" value="UniProtKB"/>
</dbReference>
<dbReference type="GO" id="GO:0003682">
    <property type="term" value="F:chromatin binding"/>
    <property type="evidence" value="ECO:0000314"/>
    <property type="project" value="UniProtKB"/>
</dbReference>
<dbReference type="GO" id="GO:0140463">
    <property type="term" value="F:chromatin-protein adaptor activity"/>
    <property type="evidence" value="ECO:0000314"/>
    <property type="project" value="UniProt"/>
</dbReference>
<dbReference type="GO" id="GO:0003677">
    <property type="term" value="F:DNA binding"/>
    <property type="evidence" value="ECO:0000314"/>
    <property type="project" value="UniProtKB"/>
</dbReference>
<dbReference type="GO" id="GO:0042393">
    <property type="term" value="F:histone binding"/>
    <property type="evidence" value="ECO:0000314"/>
    <property type="project" value="UniProtKB"/>
</dbReference>
<dbReference type="GO" id="GO:0051287">
    <property type="term" value="F:NAD binding"/>
    <property type="evidence" value="ECO:0007669"/>
    <property type="project" value="InterPro"/>
</dbReference>
<dbReference type="GO" id="GO:0050661">
    <property type="term" value="F:NADP binding"/>
    <property type="evidence" value="ECO:0007669"/>
    <property type="project" value="InterPro"/>
</dbReference>
<dbReference type="GO" id="GO:0031491">
    <property type="term" value="F:nucleosome binding"/>
    <property type="evidence" value="ECO:0000314"/>
    <property type="project" value="UniProtKB"/>
</dbReference>
<dbReference type="GO" id="GO:0140673">
    <property type="term" value="P:transcription elongation-coupled chromatin remodeling"/>
    <property type="evidence" value="ECO:0000314"/>
    <property type="project" value="UniProtKB"/>
</dbReference>
<dbReference type="GO" id="GO:0045815">
    <property type="term" value="P:transcription initiation-coupled chromatin remodeling"/>
    <property type="evidence" value="ECO:0000314"/>
    <property type="project" value="UniProt"/>
</dbReference>
<dbReference type="CDD" id="cd05836">
    <property type="entry name" value="PWWP_GLYR1"/>
    <property type="match status" value="1"/>
</dbReference>
<dbReference type="FunFam" id="3.40.50.720:FF:000058">
    <property type="entry name" value="Putative oxidoreductase GLYR1 homolog"/>
    <property type="match status" value="1"/>
</dbReference>
<dbReference type="FunFam" id="1.10.1040.10:FF:000011">
    <property type="entry name" value="putative oxidoreductase GLYR1 isoform X1"/>
    <property type="match status" value="1"/>
</dbReference>
<dbReference type="FunFam" id="2.30.30.140:FF:000027">
    <property type="entry name" value="putative oxidoreductase GLYR1 isoform X1"/>
    <property type="match status" value="1"/>
</dbReference>
<dbReference type="Gene3D" id="2.30.30.140">
    <property type="match status" value="1"/>
</dbReference>
<dbReference type="Gene3D" id="1.10.1040.10">
    <property type="entry name" value="N-(1-d-carboxylethyl)-l-norvaline Dehydrogenase, domain 2"/>
    <property type="match status" value="1"/>
</dbReference>
<dbReference type="Gene3D" id="3.40.50.720">
    <property type="entry name" value="NAD(P)-binding Rossmann-like Domain"/>
    <property type="match status" value="1"/>
</dbReference>
<dbReference type="InterPro" id="IPR008927">
    <property type="entry name" value="6-PGluconate_DH-like_C_sf"/>
</dbReference>
<dbReference type="InterPro" id="IPR013328">
    <property type="entry name" value="6PGD_dom2"/>
</dbReference>
<dbReference type="InterPro" id="IPR006115">
    <property type="entry name" value="6PGDH_NADP-bd"/>
</dbReference>
<dbReference type="InterPro" id="IPR035501">
    <property type="entry name" value="GLYR1_PWWP"/>
</dbReference>
<dbReference type="InterPro" id="IPR029154">
    <property type="entry name" value="HIBADH-like_NADP-bd"/>
</dbReference>
<dbReference type="InterPro" id="IPR051265">
    <property type="entry name" value="HIBADH-related_NP60_sf"/>
</dbReference>
<dbReference type="InterPro" id="IPR036291">
    <property type="entry name" value="NAD(P)-bd_dom_sf"/>
</dbReference>
<dbReference type="InterPro" id="IPR000313">
    <property type="entry name" value="PWWP_dom"/>
</dbReference>
<dbReference type="PANTHER" id="PTHR43580:SF2">
    <property type="entry name" value="CYTOKINE-LIKE NUCLEAR FACTOR N-PAC"/>
    <property type="match status" value="1"/>
</dbReference>
<dbReference type="PANTHER" id="PTHR43580">
    <property type="entry name" value="OXIDOREDUCTASE GLYR1-RELATED"/>
    <property type="match status" value="1"/>
</dbReference>
<dbReference type="Pfam" id="PF14833">
    <property type="entry name" value="NAD_binding_11"/>
    <property type="match status" value="1"/>
</dbReference>
<dbReference type="Pfam" id="PF03446">
    <property type="entry name" value="NAD_binding_2"/>
    <property type="match status" value="1"/>
</dbReference>
<dbReference type="Pfam" id="PF00855">
    <property type="entry name" value="PWWP"/>
    <property type="match status" value="1"/>
</dbReference>
<dbReference type="SMART" id="SM00293">
    <property type="entry name" value="PWWP"/>
    <property type="match status" value="1"/>
</dbReference>
<dbReference type="SUPFAM" id="SSF48179">
    <property type="entry name" value="6-phosphogluconate dehydrogenase C-terminal domain-like"/>
    <property type="match status" value="1"/>
</dbReference>
<dbReference type="SUPFAM" id="SSF51735">
    <property type="entry name" value="NAD(P)-binding Rossmann-fold domains"/>
    <property type="match status" value="1"/>
</dbReference>
<dbReference type="SUPFAM" id="SSF63748">
    <property type="entry name" value="Tudor/PWWP/MBT"/>
    <property type="match status" value="1"/>
</dbReference>
<dbReference type="PROSITE" id="PS50812">
    <property type="entry name" value="PWWP"/>
    <property type="match status" value="1"/>
</dbReference>
<evidence type="ECO:0000255" key="1">
    <source>
        <dbReference type="PROSITE-ProRule" id="PRU00162"/>
    </source>
</evidence>
<evidence type="ECO:0000256" key="2">
    <source>
        <dbReference type="SAM" id="MobiDB-lite"/>
    </source>
</evidence>
<evidence type="ECO:0000269" key="3">
    <source>
    </source>
</evidence>
<evidence type="ECO:0000269" key="4">
    <source>
    </source>
</evidence>
<evidence type="ECO:0000269" key="5">
    <source>
    </source>
</evidence>
<evidence type="ECO:0000269" key="6">
    <source>
    </source>
</evidence>
<evidence type="ECO:0000269" key="7">
    <source>
    </source>
</evidence>
<evidence type="ECO:0000269" key="8">
    <source>
    </source>
</evidence>
<evidence type="ECO:0000269" key="9">
    <source>
    </source>
</evidence>
<evidence type="ECO:0000269" key="10">
    <source ref="20"/>
</evidence>
<evidence type="ECO:0000303" key="11">
    <source>
    </source>
</evidence>
<evidence type="ECO:0000303" key="12">
    <source>
    </source>
</evidence>
<evidence type="ECO:0000303" key="13">
    <source>
    </source>
</evidence>
<evidence type="ECO:0000303" key="14">
    <source>
    </source>
</evidence>
<evidence type="ECO:0000303" key="15">
    <source ref="3"/>
</evidence>
<evidence type="ECO:0000305" key="16"/>
<evidence type="ECO:0000305" key="17">
    <source>
    </source>
</evidence>
<evidence type="ECO:0000312" key="18">
    <source>
        <dbReference type="HGNC" id="HGNC:24434"/>
    </source>
</evidence>
<evidence type="ECO:0007744" key="19">
    <source>
        <dbReference type="PDB" id="2UYY"/>
    </source>
</evidence>
<evidence type="ECO:0007744" key="20">
    <source>
        <dbReference type="PDB" id="4GUR"/>
    </source>
</evidence>
<evidence type="ECO:0007744" key="21">
    <source>
        <dbReference type="PDB" id="4GUS"/>
    </source>
</evidence>
<evidence type="ECO:0007744" key="22">
    <source>
        <dbReference type="PDB" id="4GUT"/>
    </source>
</evidence>
<evidence type="ECO:0007744" key="23">
    <source>
        <dbReference type="PDB" id="4GUU"/>
    </source>
</evidence>
<evidence type="ECO:0007744" key="24">
    <source>
        <dbReference type="PDB" id="6R1U"/>
    </source>
</evidence>
<evidence type="ECO:0007744" key="25">
    <source>
        <dbReference type="PDB" id="6R25"/>
    </source>
</evidence>
<evidence type="ECO:0007744" key="26">
    <source>
    </source>
</evidence>
<evidence type="ECO:0007744" key="27">
    <source>
    </source>
</evidence>
<evidence type="ECO:0007744" key="28">
    <source>
    </source>
</evidence>
<evidence type="ECO:0007744" key="29">
    <source>
    </source>
</evidence>
<evidence type="ECO:0007744" key="30">
    <source>
    </source>
</evidence>
<evidence type="ECO:0007744" key="31">
    <source>
    </source>
</evidence>
<evidence type="ECO:0007744" key="32">
    <source>
    </source>
</evidence>
<evidence type="ECO:0007829" key="33">
    <source>
        <dbReference type="PDB" id="2UYY"/>
    </source>
</evidence>
<evidence type="ECO:0007829" key="34">
    <source>
        <dbReference type="PDB" id="4HSU"/>
    </source>
</evidence>
<gene>
    <name evidence="18" type="primary">GLYR1</name>
    <name type="synonym">HIBDL</name>
    <name evidence="13" type="synonym">NDF</name>
    <name type="synonym">NP60</name>
    <name evidence="14" type="synonym">NPAC</name>
</gene>
<name>GLYR1_HUMAN</name>
<reference key="1">
    <citation type="journal article" date="2006" name="J. Cell Sci.">
        <title>Nuclear protein NP60 regulates p38 MAPK activity.</title>
        <authorList>
            <person name="Fu J."/>
            <person name="Yang Z."/>
            <person name="Wei J."/>
            <person name="Han J."/>
            <person name="Gu J."/>
        </authorList>
    </citation>
    <scope>NUCLEOTIDE SEQUENCE [MRNA] (ISOFORM 1)</scope>
    <scope>FUNCTION</scope>
    <scope>SUBCELLULAR LOCATION</scope>
    <scope>DOMAIN</scope>
    <scope>INTERACTION WITH MAPK14</scope>
</reference>
<reference key="2">
    <citation type="submission" date="2000-03" db="EMBL/GenBank/DDBJ databases">
        <title>Molecular characterization of a novel human PWWP domain containing protein with homology to 3-hydroxyisobutyrate dehydrogenase.</title>
        <authorList>
            <person name="Watari Y."/>
            <person name="Tsujino T."/>
            <person name="Nonaka H."/>
            <person name="Shirai Y."/>
            <person name="Saito N."/>
            <person name="Yokoyama M."/>
        </authorList>
    </citation>
    <scope>NUCLEOTIDE SEQUENCE [MRNA] (ISOFORM 1)</scope>
</reference>
<reference key="3">
    <citation type="submission" date="2000-12" db="EMBL/GenBank/DDBJ databases">
        <title>A novel cytokine-like nuclear factor, N-PAC.</title>
        <authorList>
            <person name="New L."/>
            <person name="Han J."/>
        </authorList>
    </citation>
    <scope>NUCLEOTIDE SEQUENCE [MRNA] (ISOFORM 3)</scope>
</reference>
<reference key="4">
    <citation type="journal article" date="2004" name="Nat. Genet.">
        <title>Complete sequencing and characterization of 21,243 full-length human cDNAs.</title>
        <authorList>
            <person name="Ota T."/>
            <person name="Suzuki Y."/>
            <person name="Nishikawa T."/>
            <person name="Otsuki T."/>
            <person name="Sugiyama T."/>
            <person name="Irie R."/>
            <person name="Wakamatsu A."/>
            <person name="Hayashi K."/>
            <person name="Sato H."/>
            <person name="Nagai K."/>
            <person name="Kimura K."/>
            <person name="Makita H."/>
            <person name="Sekine M."/>
            <person name="Obayashi M."/>
            <person name="Nishi T."/>
            <person name="Shibahara T."/>
            <person name="Tanaka T."/>
            <person name="Ishii S."/>
            <person name="Yamamoto J."/>
            <person name="Saito K."/>
            <person name="Kawai Y."/>
            <person name="Isono Y."/>
            <person name="Nakamura Y."/>
            <person name="Nagahari K."/>
            <person name="Murakami K."/>
            <person name="Yasuda T."/>
            <person name="Iwayanagi T."/>
            <person name="Wagatsuma M."/>
            <person name="Shiratori A."/>
            <person name="Sudo H."/>
            <person name="Hosoiri T."/>
            <person name="Kaku Y."/>
            <person name="Kodaira H."/>
            <person name="Kondo H."/>
            <person name="Sugawara M."/>
            <person name="Takahashi M."/>
            <person name="Kanda K."/>
            <person name="Yokoi T."/>
            <person name="Furuya T."/>
            <person name="Kikkawa E."/>
            <person name="Omura Y."/>
            <person name="Abe K."/>
            <person name="Kamihara K."/>
            <person name="Katsuta N."/>
            <person name="Sato K."/>
            <person name="Tanikawa M."/>
            <person name="Yamazaki M."/>
            <person name="Ninomiya K."/>
            <person name="Ishibashi T."/>
            <person name="Yamashita H."/>
            <person name="Murakawa K."/>
            <person name="Fujimori K."/>
            <person name="Tanai H."/>
            <person name="Kimata M."/>
            <person name="Watanabe M."/>
            <person name="Hiraoka S."/>
            <person name="Chiba Y."/>
            <person name="Ishida S."/>
            <person name="Ono Y."/>
            <person name="Takiguchi S."/>
            <person name="Watanabe S."/>
            <person name="Yosida M."/>
            <person name="Hotuta T."/>
            <person name="Kusano J."/>
            <person name="Kanehori K."/>
            <person name="Takahashi-Fujii A."/>
            <person name="Hara H."/>
            <person name="Tanase T.-O."/>
            <person name="Nomura Y."/>
            <person name="Togiya S."/>
            <person name="Komai F."/>
            <person name="Hara R."/>
            <person name="Takeuchi K."/>
            <person name="Arita M."/>
            <person name="Imose N."/>
            <person name="Musashino K."/>
            <person name="Yuuki H."/>
            <person name="Oshima A."/>
            <person name="Sasaki N."/>
            <person name="Aotsuka S."/>
            <person name="Yoshikawa Y."/>
            <person name="Matsunawa H."/>
            <person name="Ichihara T."/>
            <person name="Shiohata N."/>
            <person name="Sano S."/>
            <person name="Moriya S."/>
            <person name="Momiyama H."/>
            <person name="Satoh N."/>
            <person name="Takami S."/>
            <person name="Terashima Y."/>
            <person name="Suzuki O."/>
            <person name="Nakagawa S."/>
            <person name="Senoh A."/>
            <person name="Mizoguchi H."/>
            <person name="Goto Y."/>
            <person name="Shimizu F."/>
            <person name="Wakebe H."/>
            <person name="Hishigaki H."/>
            <person name="Watanabe T."/>
            <person name="Sugiyama A."/>
            <person name="Takemoto M."/>
            <person name="Kawakami B."/>
            <person name="Yamazaki M."/>
            <person name="Watanabe K."/>
            <person name="Kumagai A."/>
            <person name="Itakura S."/>
            <person name="Fukuzumi Y."/>
            <person name="Fujimori Y."/>
            <person name="Komiyama M."/>
            <person name="Tashiro H."/>
            <person name="Tanigami A."/>
            <person name="Fujiwara T."/>
            <person name="Ono T."/>
            <person name="Yamada K."/>
            <person name="Fujii Y."/>
            <person name="Ozaki K."/>
            <person name="Hirao M."/>
            <person name="Ohmori Y."/>
            <person name="Kawabata A."/>
            <person name="Hikiji T."/>
            <person name="Kobatake N."/>
            <person name="Inagaki H."/>
            <person name="Ikema Y."/>
            <person name="Okamoto S."/>
            <person name="Okitani R."/>
            <person name="Kawakami T."/>
            <person name="Noguchi S."/>
            <person name="Itoh T."/>
            <person name="Shigeta K."/>
            <person name="Senba T."/>
            <person name="Matsumura K."/>
            <person name="Nakajima Y."/>
            <person name="Mizuno T."/>
            <person name="Morinaga M."/>
            <person name="Sasaki M."/>
            <person name="Togashi T."/>
            <person name="Oyama M."/>
            <person name="Hata H."/>
            <person name="Watanabe M."/>
            <person name="Komatsu T."/>
            <person name="Mizushima-Sugano J."/>
            <person name="Satoh T."/>
            <person name="Shirai Y."/>
            <person name="Takahashi Y."/>
            <person name="Nakagawa K."/>
            <person name="Okumura K."/>
            <person name="Nagase T."/>
            <person name="Nomura N."/>
            <person name="Kikuchi H."/>
            <person name="Masuho Y."/>
            <person name="Yamashita R."/>
            <person name="Nakai K."/>
            <person name="Yada T."/>
            <person name="Nakamura Y."/>
            <person name="Ohara O."/>
            <person name="Isogai T."/>
            <person name="Sugano S."/>
        </authorList>
    </citation>
    <scope>NUCLEOTIDE SEQUENCE [LARGE SCALE MRNA] (ISOFORM 5)</scope>
    <source>
        <tissue>Tongue</tissue>
    </source>
</reference>
<reference key="5">
    <citation type="journal article" date="2004" name="Nature">
        <title>The sequence and analysis of duplication-rich human chromosome 16.</title>
        <authorList>
            <person name="Martin J."/>
            <person name="Han C."/>
            <person name="Gordon L.A."/>
            <person name="Terry A."/>
            <person name="Prabhakar S."/>
            <person name="She X."/>
            <person name="Xie G."/>
            <person name="Hellsten U."/>
            <person name="Chan Y.M."/>
            <person name="Altherr M."/>
            <person name="Couronne O."/>
            <person name="Aerts A."/>
            <person name="Bajorek E."/>
            <person name="Black S."/>
            <person name="Blumer H."/>
            <person name="Branscomb E."/>
            <person name="Brown N.C."/>
            <person name="Bruno W.J."/>
            <person name="Buckingham J.M."/>
            <person name="Callen D.F."/>
            <person name="Campbell C.S."/>
            <person name="Campbell M.L."/>
            <person name="Campbell E.W."/>
            <person name="Caoile C."/>
            <person name="Challacombe J.F."/>
            <person name="Chasteen L.A."/>
            <person name="Chertkov O."/>
            <person name="Chi H.C."/>
            <person name="Christensen M."/>
            <person name="Clark L.M."/>
            <person name="Cohn J.D."/>
            <person name="Denys M."/>
            <person name="Detter J.C."/>
            <person name="Dickson M."/>
            <person name="Dimitrijevic-Bussod M."/>
            <person name="Escobar J."/>
            <person name="Fawcett J.J."/>
            <person name="Flowers D."/>
            <person name="Fotopulos D."/>
            <person name="Glavina T."/>
            <person name="Gomez M."/>
            <person name="Gonzales E."/>
            <person name="Goodstein D."/>
            <person name="Goodwin L.A."/>
            <person name="Grady D.L."/>
            <person name="Grigoriev I."/>
            <person name="Groza M."/>
            <person name="Hammon N."/>
            <person name="Hawkins T."/>
            <person name="Haydu L."/>
            <person name="Hildebrand C.E."/>
            <person name="Huang W."/>
            <person name="Israni S."/>
            <person name="Jett J."/>
            <person name="Jewett P.B."/>
            <person name="Kadner K."/>
            <person name="Kimball H."/>
            <person name="Kobayashi A."/>
            <person name="Krawczyk M.-C."/>
            <person name="Leyba T."/>
            <person name="Longmire J.L."/>
            <person name="Lopez F."/>
            <person name="Lou Y."/>
            <person name="Lowry S."/>
            <person name="Ludeman T."/>
            <person name="Manohar C.F."/>
            <person name="Mark G.A."/>
            <person name="McMurray K.L."/>
            <person name="Meincke L.J."/>
            <person name="Morgan J."/>
            <person name="Moyzis R.K."/>
            <person name="Mundt M.O."/>
            <person name="Munk A.C."/>
            <person name="Nandkeshwar R.D."/>
            <person name="Pitluck S."/>
            <person name="Pollard M."/>
            <person name="Predki P."/>
            <person name="Parson-Quintana B."/>
            <person name="Ramirez L."/>
            <person name="Rash S."/>
            <person name="Retterer J."/>
            <person name="Ricke D.O."/>
            <person name="Robinson D.L."/>
            <person name="Rodriguez A."/>
            <person name="Salamov A."/>
            <person name="Saunders E.H."/>
            <person name="Scott D."/>
            <person name="Shough T."/>
            <person name="Stallings R.L."/>
            <person name="Stalvey M."/>
            <person name="Sutherland R.D."/>
            <person name="Tapia R."/>
            <person name="Tesmer J.G."/>
            <person name="Thayer N."/>
            <person name="Thompson L.S."/>
            <person name="Tice H."/>
            <person name="Torney D.C."/>
            <person name="Tran-Gyamfi M."/>
            <person name="Tsai M."/>
            <person name="Ulanovsky L.E."/>
            <person name="Ustaszewska A."/>
            <person name="Vo N."/>
            <person name="White P.S."/>
            <person name="Williams A.L."/>
            <person name="Wills P.L."/>
            <person name="Wu J.-R."/>
            <person name="Wu K."/>
            <person name="Yang J."/>
            <person name="DeJong P."/>
            <person name="Bruce D."/>
            <person name="Doggett N.A."/>
            <person name="Deaven L."/>
            <person name="Schmutz J."/>
            <person name="Grimwood J."/>
            <person name="Richardson P."/>
            <person name="Rokhsar D.S."/>
            <person name="Eichler E.E."/>
            <person name="Gilna P."/>
            <person name="Lucas S.M."/>
            <person name="Myers R.M."/>
            <person name="Rubin E.M."/>
            <person name="Pennacchio L.A."/>
        </authorList>
    </citation>
    <scope>NUCLEOTIDE SEQUENCE [LARGE SCALE GENOMIC DNA]</scope>
</reference>
<reference key="6">
    <citation type="submission" date="2005-09" db="EMBL/GenBank/DDBJ databases">
        <authorList>
            <person name="Mural R.J."/>
            <person name="Istrail S."/>
            <person name="Sutton G.G."/>
            <person name="Florea L."/>
            <person name="Halpern A.L."/>
            <person name="Mobarry C.M."/>
            <person name="Lippert R."/>
            <person name="Walenz B."/>
            <person name="Shatkay H."/>
            <person name="Dew I."/>
            <person name="Miller J.R."/>
            <person name="Flanigan M.J."/>
            <person name="Edwards N.J."/>
            <person name="Bolanos R."/>
            <person name="Fasulo D."/>
            <person name="Halldorsson B.V."/>
            <person name="Hannenhalli S."/>
            <person name="Turner R."/>
            <person name="Yooseph S."/>
            <person name="Lu F."/>
            <person name="Nusskern D.R."/>
            <person name="Shue B.C."/>
            <person name="Zheng X.H."/>
            <person name="Zhong F."/>
            <person name="Delcher A.L."/>
            <person name="Huson D.H."/>
            <person name="Kravitz S.A."/>
            <person name="Mouchard L."/>
            <person name="Reinert K."/>
            <person name="Remington K.A."/>
            <person name="Clark A.G."/>
            <person name="Waterman M.S."/>
            <person name="Eichler E.E."/>
            <person name="Adams M.D."/>
            <person name="Hunkapiller M.W."/>
            <person name="Myers E.W."/>
            <person name="Venter J.C."/>
        </authorList>
    </citation>
    <scope>NUCLEOTIDE SEQUENCE [LARGE SCALE GENOMIC DNA]</scope>
</reference>
<reference key="7">
    <citation type="journal article" date="2004" name="Genome Res.">
        <title>The status, quality, and expansion of the NIH full-length cDNA project: the Mammalian Gene Collection (MGC).</title>
        <authorList>
            <consortium name="The MGC Project Team"/>
        </authorList>
    </citation>
    <scope>NUCLEOTIDE SEQUENCE [LARGE SCALE MRNA] (ISOFORMS 1 AND 4)</scope>
    <scope>NUCLEOTIDE SEQUENCE [LARGE SCALE MRNA] OF 14-553 (ISOFORM 2)</scope>
    <source>
        <tissue>Brain</tissue>
        <tissue>Lymph</tissue>
        <tissue>Placenta</tissue>
        <tissue>Testis</tissue>
    </source>
</reference>
<reference key="8">
    <citation type="journal article" date="2006" name="Cell">
        <title>Global, in vivo, and site-specific phosphorylation dynamics in signaling networks.</title>
        <authorList>
            <person name="Olsen J.V."/>
            <person name="Blagoev B."/>
            <person name="Gnad F."/>
            <person name="Macek B."/>
            <person name="Kumar C."/>
            <person name="Mortensen P."/>
            <person name="Mann M."/>
        </authorList>
    </citation>
    <scope>PHOSPHORYLATION [LARGE SCALE ANALYSIS] AT SER-167</scope>
    <scope>IDENTIFICATION BY MASS SPECTROMETRY [LARGE SCALE ANALYSIS]</scope>
    <source>
        <tissue>Cervix carcinoma</tissue>
    </source>
</reference>
<reference key="9">
    <citation type="journal article" date="2008" name="Proc. Natl. Acad. Sci. U.S.A.">
        <title>A quantitative atlas of mitotic phosphorylation.</title>
        <authorList>
            <person name="Dephoure N."/>
            <person name="Zhou C."/>
            <person name="Villen J."/>
            <person name="Beausoleil S.A."/>
            <person name="Bakalarski C.E."/>
            <person name="Elledge S.J."/>
            <person name="Gygi S.P."/>
        </authorList>
    </citation>
    <scope>IDENTIFICATION BY MASS SPECTROMETRY [LARGE SCALE ANALYSIS]</scope>
    <source>
        <tissue>Cervix carcinoma</tissue>
    </source>
</reference>
<reference key="10">
    <citation type="journal article" date="2010" name="Cell">
        <title>Quantitative interaction proteomics and genome-wide profiling of epigenetic histone marks and their readers.</title>
        <authorList>
            <person name="Vermeulen M."/>
            <person name="Eberl H.C."/>
            <person name="Matarese F."/>
            <person name="Marks H."/>
            <person name="Denissov S."/>
            <person name="Butter F."/>
            <person name="Lee K.K."/>
            <person name="Olsen J.V."/>
            <person name="Hyman A.A."/>
            <person name="Stunnenberg H.G."/>
            <person name="Mann M."/>
        </authorList>
    </citation>
    <scope>DOMAIN PWWP</scope>
    <scope>FUNCTION</scope>
</reference>
<reference key="11">
    <citation type="journal article" date="2010" name="Sci. Signal.">
        <title>Quantitative phosphoproteomics reveals widespread full phosphorylation site occupancy during mitosis.</title>
        <authorList>
            <person name="Olsen J.V."/>
            <person name="Vermeulen M."/>
            <person name="Santamaria A."/>
            <person name="Kumar C."/>
            <person name="Miller M.L."/>
            <person name="Jensen L.J."/>
            <person name="Gnad F."/>
            <person name="Cox J."/>
            <person name="Jensen T.S."/>
            <person name="Nigg E.A."/>
            <person name="Brunak S."/>
            <person name="Mann M."/>
        </authorList>
    </citation>
    <scope>PHOSPHORYLATION [LARGE SCALE ANALYSIS] AT SER-130 AND SER-540</scope>
    <scope>IDENTIFICATION BY MASS SPECTROMETRY [LARGE SCALE ANALYSIS]</scope>
    <source>
        <tissue>Cervix carcinoma</tissue>
    </source>
</reference>
<reference key="12">
    <citation type="journal article" date="2011" name="BMC Syst. Biol.">
        <title>Initial characterization of the human central proteome.</title>
        <authorList>
            <person name="Burkard T.R."/>
            <person name="Planyavsky M."/>
            <person name="Kaupe I."/>
            <person name="Breitwieser F.P."/>
            <person name="Buerckstuemmer T."/>
            <person name="Bennett K.L."/>
            <person name="Superti-Furga G."/>
            <person name="Colinge J."/>
        </authorList>
    </citation>
    <scope>IDENTIFICATION BY MASS SPECTROMETRY [LARGE SCALE ANALYSIS]</scope>
</reference>
<reference key="13">
    <citation type="journal article" date="2011" name="Sci. Signal.">
        <title>System-wide temporal characterization of the proteome and phosphoproteome of human embryonic stem cell differentiation.</title>
        <authorList>
            <person name="Rigbolt K.T."/>
            <person name="Prokhorova T.A."/>
            <person name="Akimov V."/>
            <person name="Henningsen J."/>
            <person name="Johansen P.T."/>
            <person name="Kratchmarova I."/>
            <person name="Kassem M."/>
            <person name="Mann M."/>
            <person name="Olsen J.V."/>
            <person name="Blagoev B."/>
        </authorList>
    </citation>
    <scope>PHOSPHORYLATION [LARGE SCALE ANALYSIS] AT SER-167 AND SER-540</scope>
    <scope>IDENTIFICATION BY MASS SPECTROMETRY [LARGE SCALE ANALYSIS]</scope>
</reference>
<reference key="14">
    <citation type="journal article" date="2013" name="J. Proteome Res.">
        <title>Toward a comprehensive characterization of a human cancer cell phosphoproteome.</title>
        <authorList>
            <person name="Zhou H."/>
            <person name="Di Palma S."/>
            <person name="Preisinger C."/>
            <person name="Peng M."/>
            <person name="Polat A.N."/>
            <person name="Heck A.J."/>
            <person name="Mohammed S."/>
        </authorList>
    </citation>
    <scope>PHOSPHORYLATION [LARGE SCALE ANALYSIS] AT SER-130 AND SER-540</scope>
    <scope>IDENTIFICATION BY MASS SPECTROMETRY [LARGE SCALE ANALYSIS]</scope>
    <source>
        <tissue>Cervix carcinoma</tissue>
        <tissue>Erythroleukemia</tissue>
    </source>
</reference>
<reference key="15">
    <citation type="journal article" date="2015" name="Cell Rep.">
        <title>SUMO-2 orchestrates chromatin modifiers in response to DNA damage.</title>
        <authorList>
            <person name="Hendriks I.A."/>
            <person name="Treffers L.W."/>
            <person name="Verlaan-de Vries M."/>
            <person name="Olsen J.V."/>
            <person name="Vertegaal A.C."/>
        </authorList>
    </citation>
    <scope>SUMOYLATION [LARGE SCALE ANALYSIS] AT LYS-269</scope>
    <scope>IDENTIFICATION BY MASS SPECTROMETRY [LARGE SCALE ANALYSIS]</scope>
</reference>
<reference key="16">
    <citation type="journal article" date="2015" name="Mol. Cell. Proteomics">
        <title>System-wide analysis of SUMOylation dynamics in response to replication stress reveals novel small ubiquitin-like modified target proteins and acceptor lysines relevant for genome stability.</title>
        <authorList>
            <person name="Xiao Z."/>
            <person name="Chang J.G."/>
            <person name="Hendriks I.A."/>
            <person name="Sigurdsson J.O."/>
            <person name="Olsen J.V."/>
            <person name="Vertegaal A.C."/>
        </authorList>
    </citation>
    <scope>SUMOYLATION [LARGE SCALE ANALYSIS] AT LYS-135; LYS-227; LYS-237 AND LYS-269</scope>
    <scope>IDENTIFICATION BY MASS SPECTROMETRY [LARGE SCALE ANALYSIS]</scope>
</reference>
<reference key="17">
    <citation type="journal article" date="2017" name="Nat. Struct. Mol. Biol.">
        <title>Site-specific mapping of the human SUMO proteome reveals co-modification with phosphorylation.</title>
        <authorList>
            <person name="Hendriks I.A."/>
            <person name="Lyon D."/>
            <person name="Young C."/>
            <person name="Jensen L.J."/>
            <person name="Vertegaal A.C."/>
            <person name="Nielsen M.L."/>
        </authorList>
    </citation>
    <scope>SUMOYLATION [LARGE SCALE ANALYSIS] AT LYS-135; LYS-176; LYS-179; LYS-201; LYS-211; LYS-227; LYS-237; LYS-240; LYS-269 AND LYS-302</scope>
    <scope>IDENTIFICATION BY MASS SPECTROMETRY [LARGE SCALE ANALYSIS]</scope>
</reference>
<reference key="18">
    <citation type="journal article" date="2018" name="Genes Dev.">
        <title>NDF, a nucleosome-destabilizing factor that facilitates transcription through nucleosomes.</title>
        <authorList>
            <person name="Fei J."/>
            <person name="Ishii H."/>
            <person name="Hoeksema M.A."/>
            <person name="Meitinger F."/>
            <person name="Kassavetis G.A."/>
            <person name="Glass C.K."/>
            <person name="Ren B."/>
            <person name="Kadonaga J.T."/>
        </authorList>
    </citation>
    <scope>FUNCTION</scope>
    <scope>INTERACTION WITH NUCLEOSOMES</scope>
    <scope>SUBCELLULAR LOCATION</scope>
</reference>
<reference key="19">
    <citation type="journal article" date="2019" name="J. Chem. Inf. Model.">
        <title>Impact of Mutations on NPAC Structural Dynamics: Mechanistic Insights from MD Simulations.</title>
        <authorList>
            <person name="Montefiori M."/>
            <person name="Pilotto S."/>
            <person name="Marabelli C."/>
            <person name="Moroni E."/>
            <person name="Ferraro M."/>
            <person name="Serapian S.A."/>
            <person name="Mattevi A."/>
            <person name="Colombo G."/>
        </authorList>
    </citation>
    <scope>SUBUNIT</scope>
</reference>
<reference key="20">
    <citation type="submission" date="2007-04" db="PDB data bank">
        <title>The structure of the cytokine-like nuclear factor N-PAC.</title>
        <authorList>
            <person name="Tickle J."/>
            <person name="Pilka E.S."/>
            <person name="Bunkoczi G."/>
            <person name="Berridge G."/>
            <person name="Smee C."/>
            <person name="Kavanagh K.L."/>
            <person name="Hozjan V."/>
            <person name="Niesen F.H."/>
            <person name="Papagrigoriou E."/>
            <person name="Pike A.C.W."/>
            <person name="Turnbull A."/>
            <person name="Arrowsmith C.H."/>
            <person name="Edwards A."/>
            <person name="Sundstrom M."/>
            <person name="Weigelt J."/>
            <person name="Von Delft F."/>
            <person name="Oppermann U."/>
        </authorList>
    </citation>
    <scope>X-RAY CRYSTALLOGRAPHY (2.50 ANGSTROMS) OF 261-553 IN COMPLEX WITH NAD ANALOG</scope>
</reference>
<reference key="21">
    <citation type="journal article" date="2013" name="Cell Res.">
        <title>Structural insight into substrate recognition by histone demethylase LSD2/KDM1b.</title>
        <authorList>
            <person name="Chen F."/>
            <person name="Yang H."/>
            <person name="Dong Z."/>
            <person name="Fang J."/>
            <person name="Wang P."/>
            <person name="Zhu T."/>
            <person name="Gong W."/>
            <person name="Fang R."/>
            <person name="Shi Y.G."/>
            <person name="Li Z."/>
            <person name="Xu Y."/>
        </authorList>
    </citation>
    <scope>X-RAY CRYSTALLOGRAPHY (1.99 ANGSTROMS) OF 152-268</scope>
</reference>
<reference key="22">
    <citation type="journal article" date="2013" name="Mol. Cell">
        <title>LSD2/KDM1B and its cofactor NPAC/GLYR1 endow a structural and molecular model for regulation of H3K4 demethylation.</title>
        <authorList>
            <person name="Fang R."/>
            <person name="Chen F."/>
            <person name="Dong Z."/>
            <person name="Hu D."/>
            <person name="Barbera A.J."/>
            <person name="Clark E.A."/>
            <person name="Fang J."/>
            <person name="Yang Y."/>
            <person name="Mei P."/>
            <person name="Rutenberg M."/>
            <person name="Li Z."/>
            <person name="Zhang Y."/>
            <person name="Xu Y."/>
            <person name="Yang H."/>
            <person name="Wang P."/>
            <person name="Simon M.D."/>
            <person name="Zhou Q."/>
            <person name="Li J."/>
            <person name="Marynick M.P."/>
            <person name="Li X."/>
            <person name="Lu H."/>
            <person name="Kaiser U.B."/>
            <person name="Kingston R.E."/>
            <person name="Xu Y."/>
            <person name="Shi Y.G."/>
        </authorList>
    </citation>
    <scope>X-RAY CRYSTALLOGRAPHY (2.00 ANGSTROMS) OF 152-268 IN COMPLEX WITH KDM1B AND HISTONE H3 PEPTIDE</scope>
    <scope>FUNCTION</scope>
    <scope>INTERACTION WITH KDM1B</scope>
    <scope>MUTAGENESIS OF ASP-214; HIS-216; PHE-217; HIS-219; 220-PHE--LEU-222 AND SER-223</scope>
</reference>
<reference evidence="24 25" key="23">
    <citation type="journal article" date="2019" name="Cell Rep.">
        <title>A Tail-Based Mechanism Drives Nucleosome Demethylation by the LSD2/NPAC Multimeric Complex.</title>
        <authorList>
            <person name="Marabelli C."/>
            <person name="Marrocco B."/>
            <person name="Pilotto S."/>
            <person name="Chittori S."/>
            <person name="Picaud S."/>
            <person name="Marchese S."/>
            <person name="Ciossani G."/>
            <person name="Forneris F."/>
            <person name="Filippakopoulos P."/>
            <person name="Schoehn G."/>
            <person name="Rhodes D."/>
            <person name="Subramaniam S."/>
            <person name="Mattevi A."/>
        </authorList>
    </citation>
    <scope>STRUCTURE BY ELECTRON MICROSCOPY (4.36 ANGSTROMS) OF 152-268 IN COMPLEX WITH NUCLEOSOMES AND KDM1B</scope>
    <scope>FUNCTION</scope>
    <scope>INTERACTION WITH KDM1B</scope>
    <scope>SUBCELLULAR LOCATION</scope>
    <scope>SUBUNIT</scope>
    <scope>NADPH-BINDING</scope>
    <scope>MUTAGENESIS OF MET-437</scope>
</reference>
<reference key="24">
    <citation type="journal article" date="2022" name="Cell">
        <title>Transcription factor protein interactomes reveal genetic determinants in heart disease.</title>
        <authorList>
            <person name="Gonzalez-Teran B."/>
            <person name="Pittman M."/>
            <person name="Felix F."/>
            <person name="Thomas R."/>
            <person name="Richmond-Buccola D."/>
            <person name="Huettenhain R."/>
            <person name="Choudhary K."/>
            <person name="Moroni E."/>
            <person name="Costa M.W."/>
            <person name="Huang Y."/>
            <person name="Padmanabhan A."/>
            <person name="Alexanian M."/>
            <person name="Lee C.Y."/>
            <person name="Maven B.E.J."/>
            <person name="Samse-Knapp K."/>
            <person name="Morton S.U."/>
            <person name="McGregor M."/>
            <person name="Gifford C.A."/>
            <person name="Seidman J.G."/>
            <person name="Seidman C.E."/>
            <person name="Gelb B.D."/>
            <person name="Colombo G."/>
            <person name="Conklin B.R."/>
            <person name="Black B.L."/>
            <person name="Bruneau B.G."/>
            <person name="Krogan N.J."/>
            <person name="Pollard K.S."/>
            <person name="Srivastava D."/>
        </authorList>
    </citation>
    <scope>FUNCTION</scope>
    <scope>INTERACTION WITH GATA4</scope>
    <scope>VARIANT LEU-496</scope>
    <scope>CHARACTERIZATION OF VARIANT LEU-496</scope>
</reference>
<keyword id="KW-0002">3D-structure</keyword>
<keyword id="KW-0025">Alternative splicing</keyword>
<keyword id="KW-0158">Chromosome</keyword>
<keyword id="KW-0238">DNA-binding</keyword>
<keyword id="KW-1017">Isopeptide bond</keyword>
<keyword id="KW-0539">Nucleus</keyword>
<keyword id="KW-0597">Phosphoprotein</keyword>
<keyword id="KW-1267">Proteomics identification</keyword>
<keyword id="KW-1185">Reference proteome</keyword>
<keyword id="KW-0832">Ubl conjugation</keyword>
<proteinExistence type="evidence at protein level"/>
<accession>Q49A26</accession>
<accession>B4DL47</accession>
<accession>C9JJ40</accession>
<accession>C9JJ60</accession>
<accession>Q5U632</accession>
<accession>Q6P1Q2</accession>
<accession>Q6V3W7</accession>
<accession>Q9BTI1</accession>
<accession>Q9BXK2</accession>